<evidence type="ECO:0000255" key="1">
    <source>
        <dbReference type="HAMAP-Rule" id="MF_01205"/>
    </source>
</evidence>
<keyword id="KW-0378">Hydrolase</keyword>
<keyword id="KW-1185">Reference proteome</keyword>
<reference key="1">
    <citation type="journal article" date="2010" name="PLoS ONE">
        <title>Genome sequence of Cronobacter sakazakii BAA-894 and comparative genomic hybridization analysis with other Cronobacter species.</title>
        <authorList>
            <person name="Kucerova E."/>
            <person name="Clifton S.W."/>
            <person name="Xia X.Q."/>
            <person name="Long F."/>
            <person name="Porwollik S."/>
            <person name="Fulton L."/>
            <person name="Fronick C."/>
            <person name="Minx P."/>
            <person name="Kyung K."/>
            <person name="Warren W."/>
            <person name="Fulton R."/>
            <person name="Feng D."/>
            <person name="Wollam A."/>
            <person name="Shah N."/>
            <person name="Bhonagiri V."/>
            <person name="Nash W.E."/>
            <person name="Hallsworth-Pepin K."/>
            <person name="Wilson R.K."/>
            <person name="McClelland M."/>
            <person name="Forsythe S.J."/>
        </authorList>
    </citation>
    <scope>NUCLEOTIDE SEQUENCE [LARGE SCALE GENOMIC DNA]</scope>
    <source>
        <strain>ATCC BAA-894</strain>
    </source>
</reference>
<sequence>MSGRINVVQGDITLIDVDVIVNAANPSLMGGGGVDGAIHRAAGPALLAACRQVRQQQGECQPGHAVITEAGDLAAKAVVHTVGPVWRGGQDNEPQLLADAYRNSLQLVAANGYNSVAFPAISTGIYGYPKAAAAQIAFETVSDYLTRHPQPKQVYFVCYDEENFLLYQRLLGQYDEQPGA</sequence>
<dbReference type="EC" id="3.1.1.106" evidence="1"/>
<dbReference type="EMBL" id="CP000783">
    <property type="protein sequence ID" value="ABU77549.1"/>
    <property type="molecule type" value="Genomic_DNA"/>
</dbReference>
<dbReference type="RefSeq" id="WP_012125107.1">
    <property type="nucleotide sequence ID" value="NC_009778.1"/>
</dbReference>
<dbReference type="SMR" id="A7MG20"/>
<dbReference type="KEGG" id="esa:ESA_02300"/>
<dbReference type="PATRIC" id="fig|290339.8.peg.2060"/>
<dbReference type="HOGENOM" id="CLU_046550_5_1_6"/>
<dbReference type="Proteomes" id="UP000000260">
    <property type="component" value="Chromosome"/>
</dbReference>
<dbReference type="GO" id="GO:0061463">
    <property type="term" value="F:O-acetyl-ADP-ribose deacetylase activity"/>
    <property type="evidence" value="ECO:0007669"/>
    <property type="project" value="UniProtKB-EC"/>
</dbReference>
<dbReference type="GO" id="GO:0001883">
    <property type="term" value="F:purine nucleoside binding"/>
    <property type="evidence" value="ECO:0007669"/>
    <property type="project" value="UniProtKB-UniRule"/>
</dbReference>
<dbReference type="GO" id="GO:0008428">
    <property type="term" value="F:ribonuclease inhibitor activity"/>
    <property type="evidence" value="ECO:0007669"/>
    <property type="project" value="UniProtKB-UniRule"/>
</dbReference>
<dbReference type="GO" id="GO:0042278">
    <property type="term" value="P:purine nucleoside metabolic process"/>
    <property type="evidence" value="ECO:0007669"/>
    <property type="project" value="UniProtKB-UniRule"/>
</dbReference>
<dbReference type="CDD" id="cd02908">
    <property type="entry name" value="Macro_OAADPr_deacetylase"/>
    <property type="match status" value="1"/>
</dbReference>
<dbReference type="Gene3D" id="3.40.220.10">
    <property type="entry name" value="Leucine Aminopeptidase, subunit E, domain 1"/>
    <property type="match status" value="1"/>
</dbReference>
<dbReference type="HAMAP" id="MF_01205">
    <property type="entry name" value="YmdB"/>
    <property type="match status" value="1"/>
</dbReference>
<dbReference type="InterPro" id="IPR002589">
    <property type="entry name" value="Macro_dom"/>
</dbReference>
<dbReference type="InterPro" id="IPR043472">
    <property type="entry name" value="Macro_dom-like"/>
</dbReference>
<dbReference type="InterPro" id="IPR024900">
    <property type="entry name" value="O-Ac-ADP-ribose_deAcase"/>
</dbReference>
<dbReference type="NCBIfam" id="NF001660">
    <property type="entry name" value="PRK00431.1-1"/>
    <property type="match status" value="1"/>
</dbReference>
<dbReference type="NCBIfam" id="NF001664">
    <property type="entry name" value="PRK00431.1-6"/>
    <property type="match status" value="1"/>
</dbReference>
<dbReference type="PANTHER" id="PTHR11106">
    <property type="entry name" value="GANGLIOSIDE INDUCED DIFFERENTIATION ASSOCIATED PROTEIN 2-RELATED"/>
    <property type="match status" value="1"/>
</dbReference>
<dbReference type="PANTHER" id="PTHR11106:SF27">
    <property type="entry name" value="MACRO DOMAIN-CONTAINING PROTEIN"/>
    <property type="match status" value="1"/>
</dbReference>
<dbReference type="Pfam" id="PF01661">
    <property type="entry name" value="Macro"/>
    <property type="match status" value="1"/>
</dbReference>
<dbReference type="SMART" id="SM00506">
    <property type="entry name" value="A1pp"/>
    <property type="match status" value="1"/>
</dbReference>
<dbReference type="SUPFAM" id="SSF52949">
    <property type="entry name" value="Macro domain-like"/>
    <property type="match status" value="1"/>
</dbReference>
<dbReference type="PROSITE" id="PS51154">
    <property type="entry name" value="MACRO"/>
    <property type="match status" value="1"/>
</dbReference>
<feature type="chain" id="PRO_0000409476" description="O-acetyl-ADP-ribose deacetylase">
    <location>
        <begin position="1"/>
        <end position="180"/>
    </location>
</feature>
<feature type="domain" description="Macro" evidence="1">
    <location>
        <begin position="1"/>
        <end position="175"/>
    </location>
</feature>
<feature type="active site" description="Proton acceptor" evidence="1">
    <location>
        <position position="35"/>
    </location>
</feature>
<feature type="binding site" evidence="1">
    <location>
        <begin position="11"/>
        <end position="12"/>
    </location>
    <ligand>
        <name>substrate</name>
    </ligand>
</feature>
<feature type="binding site" evidence="1">
    <location>
        <position position="25"/>
    </location>
    <ligand>
        <name>substrate</name>
    </ligand>
</feature>
<feature type="binding site" evidence="1">
    <location>
        <begin position="33"/>
        <end position="35"/>
    </location>
    <ligand>
        <name>substrate</name>
    </ligand>
</feature>
<feature type="binding site" evidence="1">
    <location>
        <begin position="122"/>
        <end position="126"/>
    </location>
    <ligand>
        <name>substrate</name>
    </ligand>
</feature>
<name>YMDB_CROS8</name>
<comment type="function">
    <text evidence="1">Deacetylates O-acetyl-ADP ribose to yield ADP-ribose and free acetate. Down-regulates ribonuclease 3 (RNase III) activity. Acts by interacting directly with the region of the ribonuclease that is required for dimerization/activation.</text>
</comment>
<comment type="catalytic activity">
    <reaction evidence="1">
        <text>3''-O-acetyl-ADP-D-ribose + H2O = ADP-D-ribose + acetate + H(+)</text>
        <dbReference type="Rhea" id="RHEA:59244"/>
        <dbReference type="ChEBI" id="CHEBI:15377"/>
        <dbReference type="ChEBI" id="CHEBI:15378"/>
        <dbReference type="ChEBI" id="CHEBI:30089"/>
        <dbReference type="ChEBI" id="CHEBI:57967"/>
        <dbReference type="ChEBI" id="CHEBI:142723"/>
        <dbReference type="EC" id="3.1.1.106"/>
    </reaction>
</comment>
<comment type="catalytic activity">
    <reaction evidence="1">
        <text>2''-O-acetyl-ADP-D-ribose + H2O = ADP-D-ribose + acetate + H(+)</text>
        <dbReference type="Rhea" id="RHEA:57060"/>
        <dbReference type="ChEBI" id="CHEBI:15377"/>
        <dbReference type="ChEBI" id="CHEBI:15378"/>
        <dbReference type="ChEBI" id="CHEBI:30089"/>
        <dbReference type="ChEBI" id="CHEBI:57967"/>
        <dbReference type="ChEBI" id="CHEBI:83767"/>
        <dbReference type="EC" id="3.1.1.106"/>
    </reaction>
</comment>
<comment type="subunit">
    <text evidence="1">Homodimer. Interacts with RNase III.</text>
</comment>
<comment type="similarity">
    <text evidence="1">Belongs to the MacroD-type family. YmdB subfamily.</text>
</comment>
<proteinExistence type="inferred from homology"/>
<accession>A7MG20</accession>
<gene>
    <name evidence="1" type="primary">ymdB</name>
    <name type="ordered locus">ESA_02300</name>
</gene>
<protein>
    <recommendedName>
        <fullName evidence="1">O-acetyl-ADP-ribose deacetylase</fullName>
        <ecNumber evidence="1">3.1.1.106</ecNumber>
    </recommendedName>
    <alternativeName>
        <fullName evidence="1">Regulator of RNase III activity</fullName>
    </alternativeName>
</protein>
<organism>
    <name type="scientific">Cronobacter sakazakii (strain ATCC BAA-894)</name>
    <name type="common">Enterobacter sakazakii</name>
    <dbReference type="NCBI Taxonomy" id="290339"/>
    <lineage>
        <taxon>Bacteria</taxon>
        <taxon>Pseudomonadati</taxon>
        <taxon>Pseudomonadota</taxon>
        <taxon>Gammaproteobacteria</taxon>
        <taxon>Enterobacterales</taxon>
        <taxon>Enterobacteriaceae</taxon>
        <taxon>Cronobacter</taxon>
    </lineage>
</organism>